<name>ATPF_XANAC</name>
<organism>
    <name type="scientific">Xanthomonas axonopodis pv. citri (strain 306)</name>
    <dbReference type="NCBI Taxonomy" id="190486"/>
    <lineage>
        <taxon>Bacteria</taxon>
        <taxon>Pseudomonadati</taxon>
        <taxon>Pseudomonadota</taxon>
        <taxon>Gammaproteobacteria</taxon>
        <taxon>Lysobacterales</taxon>
        <taxon>Lysobacteraceae</taxon>
        <taxon>Xanthomonas</taxon>
    </lineage>
</organism>
<accession>Q8PGG3</accession>
<proteinExistence type="inferred from homology"/>
<evidence type="ECO:0000255" key="1">
    <source>
        <dbReference type="HAMAP-Rule" id="MF_01398"/>
    </source>
</evidence>
<feature type="chain" id="PRO_0000368866" description="ATP synthase subunit b">
    <location>
        <begin position="1"/>
        <end position="156"/>
    </location>
</feature>
<feature type="transmembrane region" description="Helical" evidence="1">
    <location>
        <begin position="3"/>
        <end position="23"/>
    </location>
</feature>
<dbReference type="EMBL" id="AE008923">
    <property type="protein sequence ID" value="AAM38496.1"/>
    <property type="molecule type" value="Genomic_DNA"/>
</dbReference>
<dbReference type="RefSeq" id="WP_003483999.1">
    <property type="nucleotide sequence ID" value="NC_003919.1"/>
</dbReference>
<dbReference type="SMR" id="Q8PGG3"/>
<dbReference type="KEGG" id="xac:XAC3653"/>
<dbReference type="eggNOG" id="COG0711">
    <property type="taxonomic scope" value="Bacteria"/>
</dbReference>
<dbReference type="HOGENOM" id="CLU_079215_4_5_6"/>
<dbReference type="Proteomes" id="UP000000576">
    <property type="component" value="Chromosome"/>
</dbReference>
<dbReference type="GO" id="GO:0005886">
    <property type="term" value="C:plasma membrane"/>
    <property type="evidence" value="ECO:0007669"/>
    <property type="project" value="UniProtKB-SubCell"/>
</dbReference>
<dbReference type="GO" id="GO:0045259">
    <property type="term" value="C:proton-transporting ATP synthase complex"/>
    <property type="evidence" value="ECO:0007669"/>
    <property type="project" value="UniProtKB-KW"/>
</dbReference>
<dbReference type="GO" id="GO:0046933">
    <property type="term" value="F:proton-transporting ATP synthase activity, rotational mechanism"/>
    <property type="evidence" value="ECO:0007669"/>
    <property type="project" value="UniProtKB-UniRule"/>
</dbReference>
<dbReference type="GO" id="GO:0046961">
    <property type="term" value="F:proton-transporting ATPase activity, rotational mechanism"/>
    <property type="evidence" value="ECO:0007669"/>
    <property type="project" value="TreeGrafter"/>
</dbReference>
<dbReference type="CDD" id="cd06503">
    <property type="entry name" value="ATP-synt_Fo_b"/>
    <property type="match status" value="1"/>
</dbReference>
<dbReference type="Gene3D" id="6.10.250.1580">
    <property type="match status" value="1"/>
</dbReference>
<dbReference type="HAMAP" id="MF_01398">
    <property type="entry name" value="ATP_synth_b_bprime"/>
    <property type="match status" value="1"/>
</dbReference>
<dbReference type="InterPro" id="IPR028987">
    <property type="entry name" value="ATP_synth_B-like_membr_sf"/>
</dbReference>
<dbReference type="InterPro" id="IPR002146">
    <property type="entry name" value="ATP_synth_b/b'su_bac/chlpt"/>
</dbReference>
<dbReference type="InterPro" id="IPR005864">
    <property type="entry name" value="ATP_synth_F0_bsu_bac"/>
</dbReference>
<dbReference type="InterPro" id="IPR050059">
    <property type="entry name" value="ATP_synthase_B_chain"/>
</dbReference>
<dbReference type="NCBIfam" id="TIGR01144">
    <property type="entry name" value="ATP_synt_b"/>
    <property type="match status" value="1"/>
</dbReference>
<dbReference type="NCBIfam" id="NF004411">
    <property type="entry name" value="PRK05759.1-2"/>
    <property type="match status" value="1"/>
</dbReference>
<dbReference type="PANTHER" id="PTHR33445:SF1">
    <property type="entry name" value="ATP SYNTHASE SUBUNIT B"/>
    <property type="match status" value="1"/>
</dbReference>
<dbReference type="PANTHER" id="PTHR33445">
    <property type="entry name" value="ATP SYNTHASE SUBUNIT B', CHLOROPLASTIC"/>
    <property type="match status" value="1"/>
</dbReference>
<dbReference type="Pfam" id="PF00430">
    <property type="entry name" value="ATP-synt_B"/>
    <property type="match status" value="1"/>
</dbReference>
<dbReference type="SUPFAM" id="SSF81573">
    <property type="entry name" value="F1F0 ATP synthase subunit B, membrane domain"/>
    <property type="match status" value="1"/>
</dbReference>
<comment type="function">
    <text evidence="1">F(1)F(0) ATP synthase produces ATP from ADP in the presence of a proton or sodium gradient. F-type ATPases consist of two structural domains, F(1) containing the extramembraneous catalytic core and F(0) containing the membrane proton channel, linked together by a central stalk and a peripheral stalk. During catalysis, ATP synthesis in the catalytic domain of F(1) is coupled via a rotary mechanism of the central stalk subunits to proton translocation.</text>
</comment>
<comment type="function">
    <text evidence="1">Component of the F(0) channel, it forms part of the peripheral stalk, linking F(1) to F(0).</text>
</comment>
<comment type="subunit">
    <text evidence="1">F-type ATPases have 2 components, F(1) - the catalytic core - and F(0) - the membrane proton channel. F(1) has five subunits: alpha(3), beta(3), gamma(1), delta(1), epsilon(1). F(0) has three main subunits: a(1), b(2) and c(10-14). The alpha and beta chains form an alternating ring which encloses part of the gamma chain. F(1) is attached to F(0) by a central stalk formed by the gamma and epsilon chains, while a peripheral stalk is formed by the delta and b chains.</text>
</comment>
<comment type="subcellular location">
    <subcellularLocation>
        <location evidence="1">Cell inner membrane</location>
        <topology evidence="1">Single-pass membrane protein</topology>
    </subcellularLocation>
</comment>
<comment type="similarity">
    <text evidence="1">Belongs to the ATPase B chain family.</text>
</comment>
<gene>
    <name evidence="1" type="primary">atpF</name>
    <name type="ordered locus">XAC3653</name>
</gene>
<keyword id="KW-0066">ATP synthesis</keyword>
<keyword id="KW-0997">Cell inner membrane</keyword>
<keyword id="KW-1003">Cell membrane</keyword>
<keyword id="KW-0138">CF(0)</keyword>
<keyword id="KW-0375">Hydrogen ion transport</keyword>
<keyword id="KW-0406">Ion transport</keyword>
<keyword id="KW-0472">Membrane</keyword>
<keyword id="KW-0812">Transmembrane</keyword>
<keyword id="KW-1133">Transmembrane helix</keyword>
<keyword id="KW-0813">Transport</keyword>
<protein>
    <recommendedName>
        <fullName evidence="1">ATP synthase subunit b</fullName>
    </recommendedName>
    <alternativeName>
        <fullName evidence="1">ATP synthase F(0) sector subunit b</fullName>
    </alternativeName>
    <alternativeName>
        <fullName evidence="1">ATPase subunit I</fullName>
    </alternativeName>
    <alternativeName>
        <fullName evidence="1">F-type ATPase subunit b</fullName>
        <shortName evidence="1">F-ATPase subunit b</shortName>
    </alternativeName>
</protein>
<reference key="1">
    <citation type="journal article" date="2002" name="Nature">
        <title>Comparison of the genomes of two Xanthomonas pathogens with differing host specificities.</title>
        <authorList>
            <person name="da Silva A.C.R."/>
            <person name="Ferro J.A."/>
            <person name="Reinach F.C."/>
            <person name="Farah C.S."/>
            <person name="Furlan L.R."/>
            <person name="Quaggio R.B."/>
            <person name="Monteiro-Vitorello C.B."/>
            <person name="Van Sluys M.A."/>
            <person name="Almeida N.F. Jr."/>
            <person name="Alves L.M.C."/>
            <person name="do Amaral A.M."/>
            <person name="Bertolini M.C."/>
            <person name="Camargo L.E.A."/>
            <person name="Camarotte G."/>
            <person name="Cannavan F."/>
            <person name="Cardozo J."/>
            <person name="Chambergo F."/>
            <person name="Ciapina L.P."/>
            <person name="Cicarelli R.M.B."/>
            <person name="Coutinho L.L."/>
            <person name="Cursino-Santos J.R."/>
            <person name="El-Dorry H."/>
            <person name="Faria J.B."/>
            <person name="Ferreira A.J.S."/>
            <person name="Ferreira R.C.C."/>
            <person name="Ferro M.I.T."/>
            <person name="Formighieri E.F."/>
            <person name="Franco M.C."/>
            <person name="Greggio C.C."/>
            <person name="Gruber A."/>
            <person name="Katsuyama A.M."/>
            <person name="Kishi L.T."/>
            <person name="Leite R.P."/>
            <person name="Lemos E.G.M."/>
            <person name="Lemos M.V.F."/>
            <person name="Locali E.C."/>
            <person name="Machado M.A."/>
            <person name="Madeira A.M.B.N."/>
            <person name="Martinez-Rossi N.M."/>
            <person name="Martins E.C."/>
            <person name="Meidanis J."/>
            <person name="Menck C.F.M."/>
            <person name="Miyaki C.Y."/>
            <person name="Moon D.H."/>
            <person name="Moreira L.M."/>
            <person name="Novo M.T.M."/>
            <person name="Okura V.K."/>
            <person name="Oliveira M.C."/>
            <person name="Oliveira V.R."/>
            <person name="Pereira H.A."/>
            <person name="Rossi A."/>
            <person name="Sena J.A.D."/>
            <person name="Silva C."/>
            <person name="de Souza R.F."/>
            <person name="Spinola L.A.F."/>
            <person name="Takita M.A."/>
            <person name="Tamura R.E."/>
            <person name="Teixeira E.C."/>
            <person name="Tezza R.I.D."/>
            <person name="Trindade dos Santos M."/>
            <person name="Truffi D."/>
            <person name="Tsai S.M."/>
            <person name="White F.F."/>
            <person name="Setubal J.C."/>
            <person name="Kitajima J.P."/>
        </authorList>
    </citation>
    <scope>NUCLEOTIDE SEQUENCE [LARGE SCALE GENOMIC DNA]</scope>
    <source>
        <strain>306</strain>
    </source>
</reference>
<sequence>MDITLTIFAQALAFAGLIWIVATKIWPPLLQAIEERQQKIAEGLAAADRSQKDLAQAQEKVNEALKDARTKANEIIDQAHARANQIIEAAKLEAIAEANRQKDLAQTEIDASATRAREELRKQVSVLAVSGAEKLLKREIDANAHKALLDELAAEI</sequence>